<name>VKTCI_NAJNA</name>
<keyword id="KW-0903">Direct protein sequencing</keyword>
<keyword id="KW-1015">Disulfide bond</keyword>
<keyword id="KW-0646">Protease inhibitor</keyword>
<keyword id="KW-1185">Reference proteome</keyword>
<keyword id="KW-0964">Secreted</keyword>
<keyword id="KW-0722">Serine protease inhibitor</keyword>
<reference key="1">
    <citation type="journal article" date="1990" name="FEBS Lett.">
        <title>Purification and characterization of a chymotrypsin Kunitz inhibitor type of polypeptide from the venom of cobra (Naja naja naja).</title>
        <authorList>
            <person name="Shafqat J."/>
            <person name="Zaidi Z.H."/>
            <person name="Joernvall H."/>
        </authorList>
    </citation>
    <scope>PROTEIN SEQUENCE</scope>
    <scope>SUBCELLULAR LOCATION</scope>
    <source>
        <tissue>Venom</tissue>
    </source>
</reference>
<reference key="2">
    <citation type="journal article" date="2022" name="Br. J. Pharmacol.">
        <title>A new Kunitz-type snake toxin family associated with an original mode of interaction with the vasopressin 2 receptor.</title>
        <authorList>
            <person name="Droctove L."/>
            <person name="Ciolek J."/>
            <person name="Mendre C."/>
            <person name="Chorfa A."/>
            <person name="Huerta P."/>
            <person name="Carvalho C."/>
            <person name="Gouin C."/>
            <person name="Lancien M."/>
            <person name="Stanajic-Petrovic G."/>
            <person name="Braco L."/>
            <person name="Blanchet G."/>
            <person name="Upert G."/>
            <person name="De Pauw G."/>
            <person name="Barbe P."/>
            <person name="Keck M."/>
            <person name="Mourier G."/>
            <person name="Mouillac B."/>
            <person name="Denis S."/>
            <person name="Rodriguez de la Vega R.C."/>
            <person name="Quinton L."/>
            <person name="Gilles N."/>
        </authorList>
    </citation>
    <scope>FUNCTION</scope>
    <scope>BIOASSAY</scope>
    <scope>SYNTHESIS</scope>
    <source>
        <tissue>Venom</tissue>
    </source>
</reference>
<comment type="function">
    <text evidence="2 5">Serine protease inhibitor that inhibits chymotrypsin (By similarity). Also interacts with vasopressin V2 receptor (V2R/AVPR2) (PubMed:35122240). Inhibits vasopressin binding human V2R in the nanomolar range (Ki=7.87 nM), and also moderately inhibits vasopressin-induced cAMP production (IC(50)=208 nM). In vivo, intraperitoneal injection of this protein into rats increases diuresis by 1.6-fold, without any loss of electrolytes (PubMed:35122240).</text>
</comment>
<comment type="subcellular location">
    <subcellularLocation>
        <location evidence="4">Secreted</location>
    </subcellularLocation>
</comment>
<comment type="tissue specificity">
    <text evidence="7">Expressed by the venom gland.</text>
</comment>
<comment type="similarity">
    <text evidence="6">Belongs to the venom Kunitz-type family.</text>
</comment>
<accession>P19859</accession>
<proteinExistence type="evidence at protein level"/>
<protein>
    <recommendedName>
        <fullName>Kunitz-type serine protease inhibitor</fullName>
    </recommendedName>
    <alternativeName>
        <fullName>Venom chymotrypsin inhibitor</fullName>
    </alternativeName>
</protein>
<feature type="chain" id="PRO_0000155440" description="Kunitz-type serine protease inhibitor">
    <location>
        <begin position="1"/>
        <end position="57"/>
    </location>
</feature>
<feature type="domain" description="BPTI/Kunitz inhibitor" evidence="3">
    <location>
        <begin position="5"/>
        <end position="55"/>
    </location>
</feature>
<feature type="site" description="Reactive bond for chymotrypsin" evidence="1">
    <location>
        <begin position="15"/>
        <end position="16"/>
    </location>
</feature>
<feature type="disulfide bond" evidence="3">
    <location>
        <begin position="5"/>
        <end position="55"/>
    </location>
</feature>
<feature type="disulfide bond" evidence="3">
    <location>
        <begin position="14"/>
        <end position="38"/>
    </location>
</feature>
<feature type="disulfide bond" evidence="3">
    <location>
        <begin position="30"/>
        <end position="51"/>
    </location>
</feature>
<sequence length="57" mass="6508">RPRFCELAPSAGSCFGFVSSYYYNRYSNTCHSFTYSGCGKNANRFRTIDECNRTCVV</sequence>
<dbReference type="PIR" id="S12957">
    <property type="entry name" value="S12957"/>
</dbReference>
<dbReference type="SMR" id="P19859"/>
<dbReference type="MEROPS" id="I02.065"/>
<dbReference type="Proteomes" id="UP000694559">
    <property type="component" value="Unplaced"/>
</dbReference>
<dbReference type="GO" id="GO:0005615">
    <property type="term" value="C:extracellular space"/>
    <property type="evidence" value="ECO:0007669"/>
    <property type="project" value="TreeGrafter"/>
</dbReference>
<dbReference type="GO" id="GO:0004867">
    <property type="term" value="F:serine-type endopeptidase inhibitor activity"/>
    <property type="evidence" value="ECO:0007669"/>
    <property type="project" value="UniProtKB-KW"/>
</dbReference>
<dbReference type="CDD" id="cd22595">
    <property type="entry name" value="Kunitz_dendrotoxin"/>
    <property type="match status" value="1"/>
</dbReference>
<dbReference type="FunFam" id="4.10.410.10:FF:000020">
    <property type="entry name" value="Collagen, type VI, alpha 3"/>
    <property type="match status" value="1"/>
</dbReference>
<dbReference type="Gene3D" id="4.10.410.10">
    <property type="entry name" value="Pancreatic trypsin inhibitor Kunitz domain"/>
    <property type="match status" value="1"/>
</dbReference>
<dbReference type="InterPro" id="IPR002223">
    <property type="entry name" value="Kunitz_BPTI"/>
</dbReference>
<dbReference type="InterPro" id="IPR036880">
    <property type="entry name" value="Kunitz_BPTI_sf"/>
</dbReference>
<dbReference type="InterPro" id="IPR020901">
    <property type="entry name" value="Prtase_inh_Kunz-CS"/>
</dbReference>
<dbReference type="InterPro" id="IPR050098">
    <property type="entry name" value="TFPI/VKTCI-like"/>
</dbReference>
<dbReference type="PANTHER" id="PTHR10083:SF374">
    <property type="entry name" value="BPTI_KUNITZ INHIBITOR DOMAIN-CONTAINING PROTEIN"/>
    <property type="match status" value="1"/>
</dbReference>
<dbReference type="PANTHER" id="PTHR10083">
    <property type="entry name" value="KUNITZ-TYPE PROTEASE INHIBITOR-RELATED"/>
    <property type="match status" value="1"/>
</dbReference>
<dbReference type="Pfam" id="PF00014">
    <property type="entry name" value="Kunitz_BPTI"/>
    <property type="match status" value="1"/>
</dbReference>
<dbReference type="PRINTS" id="PR00759">
    <property type="entry name" value="BASICPTASE"/>
</dbReference>
<dbReference type="SMART" id="SM00131">
    <property type="entry name" value="KU"/>
    <property type="match status" value="1"/>
</dbReference>
<dbReference type="SUPFAM" id="SSF57362">
    <property type="entry name" value="BPTI-like"/>
    <property type="match status" value="1"/>
</dbReference>
<dbReference type="PROSITE" id="PS00280">
    <property type="entry name" value="BPTI_KUNITZ_1"/>
    <property type="match status" value="1"/>
</dbReference>
<dbReference type="PROSITE" id="PS50279">
    <property type="entry name" value="BPTI_KUNITZ_2"/>
    <property type="match status" value="1"/>
</dbReference>
<organism>
    <name type="scientific">Naja naja</name>
    <name type="common">Indian cobra</name>
    <dbReference type="NCBI Taxonomy" id="35670"/>
    <lineage>
        <taxon>Eukaryota</taxon>
        <taxon>Metazoa</taxon>
        <taxon>Chordata</taxon>
        <taxon>Craniata</taxon>
        <taxon>Vertebrata</taxon>
        <taxon>Euteleostomi</taxon>
        <taxon>Lepidosauria</taxon>
        <taxon>Squamata</taxon>
        <taxon>Bifurcata</taxon>
        <taxon>Unidentata</taxon>
        <taxon>Episquamata</taxon>
        <taxon>Toxicofera</taxon>
        <taxon>Serpentes</taxon>
        <taxon>Colubroidea</taxon>
        <taxon>Elapidae</taxon>
        <taxon>Elapinae</taxon>
        <taxon>Naja</taxon>
    </lineage>
</organism>
<evidence type="ECO:0000250" key="1"/>
<evidence type="ECO:0000250" key="2">
    <source>
        <dbReference type="UniProtKB" id="Q5ZPJ7"/>
    </source>
</evidence>
<evidence type="ECO:0000255" key="3">
    <source>
        <dbReference type="PROSITE-ProRule" id="PRU00031"/>
    </source>
</evidence>
<evidence type="ECO:0000269" key="4">
    <source>
    </source>
</evidence>
<evidence type="ECO:0000269" key="5">
    <source>
    </source>
</evidence>
<evidence type="ECO:0000305" key="6"/>
<evidence type="ECO:0000305" key="7">
    <source>
    </source>
</evidence>